<evidence type="ECO:0000250" key="1"/>
<evidence type="ECO:0000305" key="2"/>
<protein>
    <recommendedName>
        <fullName evidence="2">Small ribosomal subunit protein uS15c</fullName>
    </recommendedName>
    <alternativeName>
        <fullName>30S ribosomal protein S15, chloroplastic</fullName>
    </alternativeName>
</protein>
<name>RR15_DRANE</name>
<organism>
    <name type="scientific">Draba nemorosa</name>
    <name type="common">Woodland whitlowgrass</name>
    <dbReference type="NCBI Taxonomy" id="171822"/>
    <lineage>
        <taxon>Eukaryota</taxon>
        <taxon>Viridiplantae</taxon>
        <taxon>Streptophyta</taxon>
        <taxon>Embryophyta</taxon>
        <taxon>Tracheophyta</taxon>
        <taxon>Spermatophyta</taxon>
        <taxon>Magnoliopsida</taxon>
        <taxon>eudicotyledons</taxon>
        <taxon>Gunneridae</taxon>
        <taxon>Pentapetalae</taxon>
        <taxon>rosids</taxon>
        <taxon>malvids</taxon>
        <taxon>Brassicales</taxon>
        <taxon>Brassicaceae</taxon>
        <taxon>Arabideae</taxon>
        <taxon>Draba</taxon>
    </lineage>
</organism>
<reference key="1">
    <citation type="submission" date="2007-03" db="EMBL/GenBank/DDBJ databases">
        <title>Sequencing analysis of Draba nemoroza chloroplast DNA.</title>
        <authorList>
            <person name="Hosouchi T."/>
            <person name="Tsuruoka H."/>
            <person name="Kotani H."/>
        </authorList>
    </citation>
    <scope>NUCLEOTIDE SEQUENCE [LARGE SCALE GENOMIC DNA]</scope>
</reference>
<dbReference type="EMBL" id="AP009373">
    <property type="protein sequence ID" value="BAF50433.1"/>
    <property type="molecule type" value="Genomic_DNA"/>
</dbReference>
<dbReference type="RefSeq" id="YP_001123608.1">
    <property type="nucleotide sequence ID" value="NC_009272.1"/>
</dbReference>
<dbReference type="SMR" id="A4QL78"/>
<dbReference type="GeneID" id="4964742"/>
<dbReference type="GO" id="GO:0009507">
    <property type="term" value="C:chloroplast"/>
    <property type="evidence" value="ECO:0007669"/>
    <property type="project" value="UniProtKB-SubCell"/>
</dbReference>
<dbReference type="GO" id="GO:1990904">
    <property type="term" value="C:ribonucleoprotein complex"/>
    <property type="evidence" value="ECO:0007669"/>
    <property type="project" value="UniProtKB-KW"/>
</dbReference>
<dbReference type="GO" id="GO:0005840">
    <property type="term" value="C:ribosome"/>
    <property type="evidence" value="ECO:0007669"/>
    <property type="project" value="UniProtKB-KW"/>
</dbReference>
<dbReference type="GO" id="GO:0003735">
    <property type="term" value="F:structural constituent of ribosome"/>
    <property type="evidence" value="ECO:0007669"/>
    <property type="project" value="InterPro"/>
</dbReference>
<dbReference type="GO" id="GO:0006412">
    <property type="term" value="P:translation"/>
    <property type="evidence" value="ECO:0007669"/>
    <property type="project" value="UniProtKB-UniRule"/>
</dbReference>
<dbReference type="CDD" id="cd00353">
    <property type="entry name" value="Ribosomal_S15p_S13e"/>
    <property type="match status" value="1"/>
</dbReference>
<dbReference type="FunFam" id="1.10.287.10:FF:000011">
    <property type="entry name" value="30S ribosomal protein S15, chloroplastic"/>
    <property type="match status" value="1"/>
</dbReference>
<dbReference type="Gene3D" id="1.10.287.10">
    <property type="entry name" value="S15/NS1, RNA-binding"/>
    <property type="match status" value="1"/>
</dbReference>
<dbReference type="HAMAP" id="MF_01343_B">
    <property type="entry name" value="Ribosomal_uS15_B"/>
    <property type="match status" value="1"/>
</dbReference>
<dbReference type="InterPro" id="IPR000589">
    <property type="entry name" value="Ribosomal_uS15"/>
</dbReference>
<dbReference type="InterPro" id="IPR005290">
    <property type="entry name" value="Ribosomal_uS15_bac-type"/>
</dbReference>
<dbReference type="InterPro" id="IPR009068">
    <property type="entry name" value="uS15_NS1_RNA-bd_sf"/>
</dbReference>
<dbReference type="NCBIfam" id="TIGR00952">
    <property type="entry name" value="S15_bact"/>
    <property type="match status" value="1"/>
</dbReference>
<dbReference type="PANTHER" id="PTHR23321">
    <property type="entry name" value="RIBOSOMAL PROTEIN S15, BACTERIAL AND ORGANELLAR"/>
    <property type="match status" value="1"/>
</dbReference>
<dbReference type="PANTHER" id="PTHR23321:SF26">
    <property type="entry name" value="SMALL RIBOSOMAL SUBUNIT PROTEIN US15M"/>
    <property type="match status" value="1"/>
</dbReference>
<dbReference type="Pfam" id="PF00312">
    <property type="entry name" value="Ribosomal_S15"/>
    <property type="match status" value="1"/>
</dbReference>
<dbReference type="SMART" id="SM01387">
    <property type="entry name" value="Ribosomal_S15"/>
    <property type="match status" value="1"/>
</dbReference>
<dbReference type="SUPFAM" id="SSF47060">
    <property type="entry name" value="S15/NS1 RNA-binding domain"/>
    <property type="match status" value="1"/>
</dbReference>
<dbReference type="PROSITE" id="PS00362">
    <property type="entry name" value="RIBOSOMAL_S15"/>
    <property type="match status" value="1"/>
</dbReference>
<geneLocation type="chloroplast"/>
<keyword id="KW-0150">Chloroplast</keyword>
<keyword id="KW-0934">Plastid</keyword>
<keyword id="KW-0687">Ribonucleoprotein</keyword>
<keyword id="KW-0689">Ribosomal protein</keyword>
<comment type="subunit">
    <text evidence="1">Part of the 30S ribosomal subunit.</text>
</comment>
<comment type="subcellular location">
    <subcellularLocation>
        <location>Plastid</location>
        <location>Chloroplast</location>
    </subcellularLocation>
</comment>
<comment type="similarity">
    <text evidence="2">Belongs to the universal ribosomal protein uS15 family.</text>
</comment>
<sequence length="88" mass="10717">MIKNSFISFQEKKEENRGSVEFQVLSFTNKIRRLTSHLELHRKDFLSQRGLRKILGKRQRLLAYLSKKNRVRYKELINQLNIRELKTR</sequence>
<proteinExistence type="inferred from homology"/>
<gene>
    <name type="primary">rps15</name>
</gene>
<accession>A4QL78</accession>
<feature type="chain" id="PRO_0000354256" description="Small ribosomal subunit protein uS15c">
    <location>
        <begin position="1"/>
        <end position="88"/>
    </location>
</feature>